<sequence>MVAAAPSNKEPLPDMMTSIRLDQSGRVEIIDQLLLPHSVVWMPVSTPEEAFDAIKTMRIRGAPAIASLAALTLRSYLSSSSSPVSSSSSSSDVISWVGQTIDYLQSSRPTAVNLGEAMDRIRAALKDSEAQNQTAGDIIQRVKKICGDVHDEDLERNMKMGRLGAEWLWKKRGGGKKGLKVMTVCNTGSLATSGYGTAIGVITALFQEDHLDTAYYAQTTPYHQGSRLTSLELTTLQIPACMICDTMLGSLFQHEDIDGVIVGADRVVKNGDTANKIGTYQAAVLAQRHNVPFMVVAPVTTIDLSLPTGAEIHIEHRPAAEATQVRGLDTETGKLSVVRITPEGVGEGDKPWQRVYNPSFDVTPAELISAVVTEKGVAERKEGEKSIDVASIC</sequence>
<reference key="1">
    <citation type="journal article" date="2005" name="Science">
        <title>The genome of the basidiomycetous yeast and human pathogen Cryptococcus neoformans.</title>
        <authorList>
            <person name="Loftus B.J."/>
            <person name="Fung E."/>
            <person name="Roncaglia P."/>
            <person name="Rowley D."/>
            <person name="Amedeo P."/>
            <person name="Bruno D."/>
            <person name="Vamathevan J."/>
            <person name="Miranda M."/>
            <person name="Anderson I.J."/>
            <person name="Fraser J.A."/>
            <person name="Allen J.E."/>
            <person name="Bosdet I.E."/>
            <person name="Brent M.R."/>
            <person name="Chiu R."/>
            <person name="Doering T.L."/>
            <person name="Donlin M.J."/>
            <person name="D'Souza C.A."/>
            <person name="Fox D.S."/>
            <person name="Grinberg V."/>
            <person name="Fu J."/>
            <person name="Fukushima M."/>
            <person name="Haas B.J."/>
            <person name="Huang J.C."/>
            <person name="Janbon G."/>
            <person name="Jones S.J.M."/>
            <person name="Koo H.L."/>
            <person name="Krzywinski M.I."/>
            <person name="Kwon-Chung K.J."/>
            <person name="Lengeler K.B."/>
            <person name="Maiti R."/>
            <person name="Marra M.A."/>
            <person name="Marra R.E."/>
            <person name="Mathewson C.A."/>
            <person name="Mitchell T.G."/>
            <person name="Pertea M."/>
            <person name="Riggs F.R."/>
            <person name="Salzberg S.L."/>
            <person name="Schein J.E."/>
            <person name="Shvartsbeyn A."/>
            <person name="Shin H."/>
            <person name="Shumway M."/>
            <person name="Specht C.A."/>
            <person name="Suh B.B."/>
            <person name="Tenney A."/>
            <person name="Utterback T.R."/>
            <person name="Wickes B.L."/>
            <person name="Wortman J.R."/>
            <person name="Wye N.H."/>
            <person name="Kronstad J.W."/>
            <person name="Lodge J.K."/>
            <person name="Heitman J."/>
            <person name="Davis R.W."/>
            <person name="Fraser C.M."/>
            <person name="Hyman R.W."/>
        </authorList>
    </citation>
    <scope>NUCLEOTIDE SEQUENCE [LARGE SCALE GENOMIC DNA]</scope>
    <source>
        <strain>B-3501A</strain>
    </source>
</reference>
<keyword id="KW-0028">Amino-acid biosynthesis</keyword>
<keyword id="KW-0963">Cytoplasm</keyword>
<keyword id="KW-0413">Isomerase</keyword>
<keyword id="KW-0486">Methionine biosynthesis</keyword>
<keyword id="KW-0539">Nucleus</keyword>
<proteinExistence type="inferred from homology"/>
<protein>
    <recommendedName>
        <fullName evidence="1">Methylthioribose-1-phosphate isomerase</fullName>
        <shortName evidence="1">M1Pi</shortName>
        <shortName evidence="1">MTR-1-P isomerase</shortName>
        <ecNumber evidence="1">5.3.1.23</ecNumber>
    </recommendedName>
    <alternativeName>
        <fullName evidence="1">S-methyl-5-thioribose-1-phosphate isomerase</fullName>
    </alternativeName>
    <alternativeName>
        <fullName evidence="1">Translation initiation factor eIF-2B subunit alpha/beta/delta-like protein</fullName>
    </alternativeName>
</protein>
<dbReference type="EC" id="5.3.1.23" evidence="1"/>
<dbReference type="EMBL" id="AAEY01000042">
    <property type="protein sequence ID" value="EAL19162.1"/>
    <property type="molecule type" value="Genomic_DNA"/>
</dbReference>
<dbReference type="RefSeq" id="XP_773809.1">
    <property type="nucleotide sequence ID" value="XM_768716.1"/>
</dbReference>
<dbReference type="SMR" id="P0CN41"/>
<dbReference type="GeneID" id="4937784"/>
<dbReference type="KEGG" id="cnb:CNBH2610"/>
<dbReference type="VEuPathDB" id="FungiDB:CNBH2610"/>
<dbReference type="HOGENOM" id="CLU_016218_1_3_1"/>
<dbReference type="OrthoDB" id="2463at5206"/>
<dbReference type="UniPathway" id="UPA00904">
    <property type="reaction ID" value="UER00874"/>
</dbReference>
<dbReference type="GO" id="GO:0005737">
    <property type="term" value="C:cytoplasm"/>
    <property type="evidence" value="ECO:0007669"/>
    <property type="project" value="UniProtKB-SubCell"/>
</dbReference>
<dbReference type="GO" id="GO:0005634">
    <property type="term" value="C:nucleus"/>
    <property type="evidence" value="ECO:0007669"/>
    <property type="project" value="UniProtKB-SubCell"/>
</dbReference>
<dbReference type="GO" id="GO:0046523">
    <property type="term" value="F:S-methyl-5-thioribose-1-phosphate isomerase activity"/>
    <property type="evidence" value="ECO:0007669"/>
    <property type="project" value="UniProtKB-UniRule"/>
</dbReference>
<dbReference type="GO" id="GO:0019509">
    <property type="term" value="P:L-methionine salvage from methylthioadenosine"/>
    <property type="evidence" value="ECO:0007669"/>
    <property type="project" value="UniProtKB-UniRule"/>
</dbReference>
<dbReference type="FunFam" id="1.20.120.420:FF:000003">
    <property type="entry name" value="Methylthioribose-1-phosphate isomerase"/>
    <property type="match status" value="1"/>
</dbReference>
<dbReference type="FunFam" id="3.40.50.10470:FF:000013">
    <property type="entry name" value="Methylthioribose-1-phosphate isomerase"/>
    <property type="match status" value="1"/>
</dbReference>
<dbReference type="Gene3D" id="1.20.120.420">
    <property type="entry name" value="translation initiation factor eif-2b, domain 1"/>
    <property type="match status" value="1"/>
</dbReference>
<dbReference type="Gene3D" id="3.40.50.10470">
    <property type="entry name" value="Translation initiation factor eif-2b, domain 2"/>
    <property type="match status" value="1"/>
</dbReference>
<dbReference type="HAMAP" id="MF_01678">
    <property type="entry name" value="Salvage_MtnA"/>
    <property type="match status" value="1"/>
</dbReference>
<dbReference type="InterPro" id="IPR000649">
    <property type="entry name" value="IF-2B-related"/>
</dbReference>
<dbReference type="InterPro" id="IPR005251">
    <property type="entry name" value="IF-M1Pi"/>
</dbReference>
<dbReference type="InterPro" id="IPR042529">
    <property type="entry name" value="IF_2B-like_C"/>
</dbReference>
<dbReference type="InterPro" id="IPR011559">
    <property type="entry name" value="Initiation_fac_2B_a/b/d"/>
</dbReference>
<dbReference type="InterPro" id="IPR027363">
    <property type="entry name" value="M1Pi_N"/>
</dbReference>
<dbReference type="InterPro" id="IPR037171">
    <property type="entry name" value="NagB/RpiA_transferase-like"/>
</dbReference>
<dbReference type="NCBIfam" id="TIGR00524">
    <property type="entry name" value="eIF-2B_rel"/>
    <property type="match status" value="1"/>
</dbReference>
<dbReference type="NCBIfam" id="NF004326">
    <property type="entry name" value="PRK05720.1"/>
    <property type="match status" value="1"/>
</dbReference>
<dbReference type="NCBIfam" id="TIGR00512">
    <property type="entry name" value="salvage_mtnA"/>
    <property type="match status" value="1"/>
</dbReference>
<dbReference type="PANTHER" id="PTHR43475">
    <property type="entry name" value="METHYLTHIORIBOSE-1-PHOSPHATE ISOMERASE"/>
    <property type="match status" value="1"/>
</dbReference>
<dbReference type="PANTHER" id="PTHR43475:SF1">
    <property type="entry name" value="METHYLTHIORIBOSE-1-PHOSPHATE ISOMERASE"/>
    <property type="match status" value="1"/>
</dbReference>
<dbReference type="Pfam" id="PF01008">
    <property type="entry name" value="IF-2B"/>
    <property type="match status" value="1"/>
</dbReference>
<dbReference type="SUPFAM" id="SSF100950">
    <property type="entry name" value="NagB/RpiA/CoA transferase-like"/>
    <property type="match status" value="1"/>
</dbReference>
<feature type="chain" id="PRO_0000410074" description="Methylthioribose-1-phosphate isomerase">
    <location>
        <begin position="1"/>
        <end position="393"/>
    </location>
</feature>
<feature type="active site" description="Proton donor" evidence="1">
    <location>
        <position position="265"/>
    </location>
</feature>
<feature type="site" description="Transition state stabilizer" evidence="1">
    <location>
        <position position="185"/>
    </location>
</feature>
<accession>P0CN41</accession>
<accession>Q55N23</accession>
<accession>Q5KBF2</accession>
<gene>
    <name evidence="1" type="primary">MRI1</name>
    <name type="ordered locus">CNBH2610</name>
</gene>
<name>MTNA_CRYNB</name>
<evidence type="ECO:0000255" key="1">
    <source>
        <dbReference type="HAMAP-Rule" id="MF_03119"/>
    </source>
</evidence>
<comment type="function">
    <text evidence="1">Catalyzes the interconversion of methylthioribose-1-phosphate (MTR-1-P) into methylthioribulose-1-phosphate (MTRu-1-P).</text>
</comment>
<comment type="catalytic activity">
    <reaction evidence="1">
        <text>5-(methylsulfanyl)-alpha-D-ribose 1-phosphate = 5-(methylsulfanyl)-D-ribulose 1-phosphate</text>
        <dbReference type="Rhea" id="RHEA:19989"/>
        <dbReference type="ChEBI" id="CHEBI:58533"/>
        <dbReference type="ChEBI" id="CHEBI:58548"/>
        <dbReference type="EC" id="5.3.1.23"/>
    </reaction>
</comment>
<comment type="pathway">
    <text evidence="1">Amino-acid biosynthesis; L-methionine biosynthesis via salvage pathway; L-methionine from S-methyl-5-thio-alpha-D-ribose 1-phosphate: step 1/6.</text>
</comment>
<comment type="subcellular location">
    <subcellularLocation>
        <location evidence="1">Cytoplasm</location>
    </subcellularLocation>
    <subcellularLocation>
        <location evidence="1">Nucleus</location>
    </subcellularLocation>
</comment>
<comment type="similarity">
    <text evidence="1">Belongs to the eIF-2B alpha/beta/delta subunits family. MtnA subfamily.</text>
</comment>
<organism>
    <name type="scientific">Cryptococcus neoformans var. neoformans serotype D (strain B-3501A)</name>
    <name type="common">Filobasidiella neoformans</name>
    <dbReference type="NCBI Taxonomy" id="283643"/>
    <lineage>
        <taxon>Eukaryota</taxon>
        <taxon>Fungi</taxon>
        <taxon>Dikarya</taxon>
        <taxon>Basidiomycota</taxon>
        <taxon>Agaricomycotina</taxon>
        <taxon>Tremellomycetes</taxon>
        <taxon>Tremellales</taxon>
        <taxon>Cryptococcaceae</taxon>
        <taxon>Cryptococcus</taxon>
        <taxon>Cryptococcus neoformans species complex</taxon>
    </lineage>
</organism>